<evidence type="ECO:0000255" key="1">
    <source>
        <dbReference type="HAMAP-Rule" id="MF_01350"/>
    </source>
</evidence>
<sequence>MVINKNLEEQVIDLFYKLGFPKDLFGFIWIITPILTYTLGVTIGISVIVWLERKISAGVQQRIGPEHAGPLGIIQALADGAKLLSKEDIIPSRGDSFLFNVGPVMVVVPVFLSYLVIPLGHGIILADLDIGVFFWIAVSSVAPLGLLTAGYGSNNKYSSLGGLRAAAQSISYEIPLALCVLSVSPLSNSLSTVDIVEAQSKYGFWGWNSWRQPIGFVAFFISSLAECERLPFDLPEAEEELVAGYQTEYSGIKFGLFYVASHPNLLTSSLSATILYLGGWNSPIPFLFLPKFDRLGWNSTDETSEVISITIAIIITLAKAYSFLFISIATRWTLPRVRMDQLLDLGWKSLLPVALGNSLPTASFQLSSP</sequence>
<keyword id="KW-0150">Chloroplast</keyword>
<keyword id="KW-0472">Membrane</keyword>
<keyword id="KW-0520">NAD</keyword>
<keyword id="KW-0521">NADP</keyword>
<keyword id="KW-0934">Plastid</keyword>
<keyword id="KW-0618">Plastoquinone</keyword>
<keyword id="KW-0874">Quinone</keyword>
<keyword id="KW-0793">Thylakoid</keyword>
<keyword id="KW-1278">Translocase</keyword>
<keyword id="KW-0812">Transmembrane</keyword>
<keyword id="KW-1133">Transmembrane helix</keyword>
<comment type="function">
    <text evidence="1">NDH shuttles electrons from NAD(P)H:plastoquinone, via FMN and iron-sulfur (Fe-S) centers, to quinones in the photosynthetic chain and possibly in a chloroplast respiratory chain. The immediate electron acceptor for the enzyme in this species is believed to be plastoquinone. Couples the redox reaction to proton translocation, and thus conserves the redox energy in a proton gradient.</text>
</comment>
<comment type="catalytic activity">
    <reaction evidence="1">
        <text>a plastoquinone + NADH + (n+1) H(+)(in) = a plastoquinol + NAD(+) + n H(+)(out)</text>
        <dbReference type="Rhea" id="RHEA:42608"/>
        <dbReference type="Rhea" id="RHEA-COMP:9561"/>
        <dbReference type="Rhea" id="RHEA-COMP:9562"/>
        <dbReference type="ChEBI" id="CHEBI:15378"/>
        <dbReference type="ChEBI" id="CHEBI:17757"/>
        <dbReference type="ChEBI" id="CHEBI:57540"/>
        <dbReference type="ChEBI" id="CHEBI:57945"/>
        <dbReference type="ChEBI" id="CHEBI:62192"/>
    </reaction>
</comment>
<comment type="catalytic activity">
    <reaction evidence="1">
        <text>a plastoquinone + NADPH + (n+1) H(+)(in) = a plastoquinol + NADP(+) + n H(+)(out)</text>
        <dbReference type="Rhea" id="RHEA:42612"/>
        <dbReference type="Rhea" id="RHEA-COMP:9561"/>
        <dbReference type="Rhea" id="RHEA-COMP:9562"/>
        <dbReference type="ChEBI" id="CHEBI:15378"/>
        <dbReference type="ChEBI" id="CHEBI:17757"/>
        <dbReference type="ChEBI" id="CHEBI:57783"/>
        <dbReference type="ChEBI" id="CHEBI:58349"/>
        <dbReference type="ChEBI" id="CHEBI:62192"/>
    </reaction>
</comment>
<comment type="subunit">
    <text evidence="1">NDH is composed of at least 16 different subunits, 5 of which are encoded in the nucleus.</text>
</comment>
<comment type="subcellular location">
    <subcellularLocation>
        <location evidence="1">Plastid</location>
        <location evidence="1">Chloroplast thylakoid membrane</location>
        <topology evidence="1">Multi-pass membrane protein</topology>
    </subcellularLocation>
</comment>
<comment type="similarity">
    <text evidence="1">Belongs to the complex I subunit 1 family.</text>
</comment>
<dbReference type="EC" id="7.1.1.-" evidence="1"/>
<dbReference type="EMBL" id="AY660566">
    <property type="protein sequence ID" value="AAT80758.1"/>
    <property type="molecule type" value="Genomic_DNA"/>
</dbReference>
<dbReference type="RefSeq" id="YP_209562.1">
    <property type="nucleotide sequence ID" value="NC_006861.1"/>
</dbReference>
<dbReference type="SMR" id="Q5SCZ2"/>
<dbReference type="GeneID" id="3283827"/>
<dbReference type="GO" id="GO:0009535">
    <property type="term" value="C:chloroplast thylakoid membrane"/>
    <property type="evidence" value="ECO:0007669"/>
    <property type="project" value="UniProtKB-SubCell"/>
</dbReference>
<dbReference type="GO" id="GO:0003954">
    <property type="term" value="F:NADH dehydrogenase activity"/>
    <property type="evidence" value="ECO:0007669"/>
    <property type="project" value="TreeGrafter"/>
</dbReference>
<dbReference type="GO" id="GO:0016655">
    <property type="term" value="F:oxidoreductase activity, acting on NAD(P)H, quinone or similar compound as acceptor"/>
    <property type="evidence" value="ECO:0007669"/>
    <property type="project" value="UniProtKB-UniRule"/>
</dbReference>
<dbReference type="GO" id="GO:0048038">
    <property type="term" value="F:quinone binding"/>
    <property type="evidence" value="ECO:0007669"/>
    <property type="project" value="UniProtKB-KW"/>
</dbReference>
<dbReference type="GO" id="GO:0009060">
    <property type="term" value="P:aerobic respiration"/>
    <property type="evidence" value="ECO:0007669"/>
    <property type="project" value="TreeGrafter"/>
</dbReference>
<dbReference type="GO" id="GO:0019684">
    <property type="term" value="P:photosynthesis, light reaction"/>
    <property type="evidence" value="ECO:0007669"/>
    <property type="project" value="UniProtKB-UniRule"/>
</dbReference>
<dbReference type="HAMAP" id="MF_01350">
    <property type="entry name" value="NDH1_NuoH"/>
    <property type="match status" value="1"/>
</dbReference>
<dbReference type="InterPro" id="IPR001694">
    <property type="entry name" value="NADH_UbQ_OxRdtase_su1/FPO"/>
</dbReference>
<dbReference type="InterPro" id="IPR018086">
    <property type="entry name" value="NADH_UbQ_OxRdtase_su1_CS"/>
</dbReference>
<dbReference type="NCBIfam" id="NF004741">
    <property type="entry name" value="PRK06076.1-2"/>
    <property type="match status" value="1"/>
</dbReference>
<dbReference type="PANTHER" id="PTHR11432">
    <property type="entry name" value="NADH DEHYDROGENASE SUBUNIT 1"/>
    <property type="match status" value="1"/>
</dbReference>
<dbReference type="PANTHER" id="PTHR11432:SF3">
    <property type="entry name" value="NADH-UBIQUINONE OXIDOREDUCTASE CHAIN 1"/>
    <property type="match status" value="1"/>
</dbReference>
<dbReference type="Pfam" id="PF00146">
    <property type="entry name" value="NADHdh"/>
    <property type="match status" value="1"/>
</dbReference>
<dbReference type="PROSITE" id="PS00667">
    <property type="entry name" value="COMPLEX1_ND1_1"/>
    <property type="match status" value="1"/>
</dbReference>
<dbReference type="PROSITE" id="PS00668">
    <property type="entry name" value="COMPLEX1_ND1_2"/>
    <property type="match status" value="1"/>
</dbReference>
<protein>
    <recommendedName>
        <fullName evidence="1">NAD(P)H-quinone oxidoreductase subunit 1, chloroplastic</fullName>
        <ecNumber evidence="1">7.1.1.-</ecNumber>
    </recommendedName>
    <alternativeName>
        <fullName evidence="1">NAD(P)H dehydrogenase subunit 1</fullName>
        <shortName evidence="1">NDH subunit 1</shortName>
    </alternativeName>
    <alternativeName>
        <fullName evidence="1">NADH-plastoquinone oxidoreductase subunit 1</fullName>
    </alternativeName>
</protein>
<name>NU1C_HUPLU</name>
<organism>
    <name type="scientific">Huperzia lucidula</name>
    <name type="common">Shining clubmoss</name>
    <name type="synonym">Lycopodium lucidulum</name>
    <dbReference type="NCBI Taxonomy" id="37429"/>
    <lineage>
        <taxon>Eukaryota</taxon>
        <taxon>Viridiplantae</taxon>
        <taxon>Streptophyta</taxon>
        <taxon>Embryophyta</taxon>
        <taxon>Tracheophyta</taxon>
        <taxon>Lycopodiopsida</taxon>
        <taxon>Lycopodiales</taxon>
        <taxon>Lycopodiaceae</taxon>
        <taxon>Huperzioideae</taxon>
        <taxon>Huperzia</taxon>
    </lineage>
</organism>
<gene>
    <name evidence="1" type="primary">ndhA</name>
</gene>
<reference key="1">
    <citation type="journal article" date="2005" name="Gene">
        <title>The first complete chloroplast genome sequence of a lycophyte, Huperzia lucidula (Lycopodiaceae).</title>
        <authorList>
            <person name="Wolf P.G."/>
            <person name="Karol K.G."/>
            <person name="Mandoli D.F."/>
            <person name="Kuehl J.V."/>
            <person name="Arumuganathan K."/>
            <person name="Ellis M.W."/>
            <person name="Mishler B.D."/>
            <person name="Kelch D.G."/>
            <person name="Olmstead R.G."/>
            <person name="Boore J.L."/>
        </authorList>
    </citation>
    <scope>NUCLEOTIDE SEQUENCE [LARGE SCALE GENOMIC DNA]</scope>
</reference>
<geneLocation type="chloroplast"/>
<feature type="chain" id="PRO_0000240022" description="NAD(P)H-quinone oxidoreductase subunit 1, chloroplastic">
    <location>
        <begin position="1"/>
        <end position="369"/>
    </location>
</feature>
<feature type="transmembrane region" description="Helical" evidence="1">
    <location>
        <begin position="25"/>
        <end position="45"/>
    </location>
</feature>
<feature type="transmembrane region" description="Helical" evidence="1">
    <location>
        <begin position="104"/>
        <end position="124"/>
    </location>
</feature>
<feature type="transmembrane region" description="Helical" evidence="1">
    <location>
        <begin position="130"/>
        <end position="150"/>
    </location>
</feature>
<feature type="transmembrane region" description="Helical" evidence="1">
    <location>
        <begin position="270"/>
        <end position="290"/>
    </location>
</feature>
<feature type="transmembrane region" description="Helical" evidence="1">
    <location>
        <begin position="306"/>
        <end position="326"/>
    </location>
</feature>
<proteinExistence type="inferred from homology"/>
<accession>Q5SCZ2</accession>